<evidence type="ECO:0000255" key="1">
    <source>
        <dbReference type="PROSITE-ProRule" id="PRU00159"/>
    </source>
</evidence>
<evidence type="ECO:0000255" key="2">
    <source>
        <dbReference type="PROSITE-ProRule" id="PRU10027"/>
    </source>
</evidence>
<evidence type="ECO:0000256" key="3">
    <source>
        <dbReference type="SAM" id="MobiDB-lite"/>
    </source>
</evidence>
<evidence type="ECO:0000269" key="4">
    <source>
    </source>
</evidence>
<evidence type="ECO:0000303" key="5">
    <source>
    </source>
</evidence>
<evidence type="ECO:0000303" key="6">
    <source>
    </source>
</evidence>
<evidence type="ECO:0000305" key="7"/>
<evidence type="ECO:0007744" key="8">
    <source>
    </source>
</evidence>
<dbReference type="EC" id="2.7.11.1"/>
<dbReference type="EMBL" id="AB354583">
    <property type="protein sequence ID" value="BAF93448.1"/>
    <property type="molecule type" value="mRNA"/>
</dbReference>
<dbReference type="EMBL" id="AK133498">
    <property type="protein sequence ID" value="BAE21689.1"/>
    <property type="molecule type" value="mRNA"/>
</dbReference>
<dbReference type="EMBL" id="AC158304">
    <property type="status" value="NOT_ANNOTATED_CDS"/>
    <property type="molecule type" value="Genomic_DNA"/>
</dbReference>
<dbReference type="EMBL" id="BC147572">
    <property type="protein sequence ID" value="AAI47573.1"/>
    <property type="molecule type" value="mRNA"/>
</dbReference>
<dbReference type="EMBL" id="BC147577">
    <property type="protein sequence ID" value="AAI47578.1"/>
    <property type="molecule type" value="mRNA"/>
</dbReference>
<dbReference type="CCDS" id="CCDS21024.2">
    <molecule id="Q3V016-1"/>
</dbReference>
<dbReference type="RefSeq" id="NP_001028487.2">
    <molecule id="Q3V016-1"/>
    <property type="nucleotide sequence ID" value="NM_001033315.2"/>
</dbReference>
<dbReference type="RefSeq" id="XP_011248824.1">
    <molecule id="Q3V016-2"/>
    <property type="nucleotide sequence ID" value="XM_011250522.3"/>
</dbReference>
<dbReference type="SMR" id="Q3V016"/>
<dbReference type="FunCoup" id="Q3V016">
    <property type="interactions" value="1344"/>
</dbReference>
<dbReference type="STRING" id="10090.ENSMUSP00000103990"/>
<dbReference type="iPTMnet" id="Q3V016"/>
<dbReference type="PhosphoSitePlus" id="Q3V016"/>
<dbReference type="SwissPalm" id="Q3V016"/>
<dbReference type="PaxDb" id="10090-ENSMUSP00000103990"/>
<dbReference type="PeptideAtlas" id="Q3V016"/>
<dbReference type="ProteomicsDB" id="273171">
    <molecule id="Q3V016-1"/>
</dbReference>
<dbReference type="ProteomicsDB" id="273172">
    <molecule id="Q3V016-2"/>
</dbReference>
<dbReference type="Antibodypedia" id="16956">
    <property type="antibodies" value="293 antibodies from 28 providers"/>
</dbReference>
<dbReference type="DNASU" id="233020"/>
<dbReference type="Ensembl" id="ENSMUST00000037134.7">
    <molecule id="Q3V016-2"/>
    <property type="protein sequence ID" value="ENSMUSP00000043175.7"/>
    <property type="gene ID" value="ENSMUSG00000040424.16"/>
</dbReference>
<dbReference type="Ensembl" id="ENSMUST00000108353.9">
    <molecule id="Q3V016-1"/>
    <property type="protein sequence ID" value="ENSMUSP00000103990.3"/>
    <property type="gene ID" value="ENSMUSG00000040424.16"/>
</dbReference>
<dbReference type="GeneID" id="233020"/>
<dbReference type="KEGG" id="mmu:233020"/>
<dbReference type="UCSC" id="uc009fwl.2">
    <molecule id="Q3V016-1"/>
    <property type="organism name" value="mouse"/>
</dbReference>
<dbReference type="AGR" id="MGI:2685008"/>
<dbReference type="CTD" id="147746"/>
<dbReference type="MGI" id="MGI:2685008">
    <property type="gene designation" value="Hipk4"/>
</dbReference>
<dbReference type="VEuPathDB" id="HostDB:ENSMUSG00000040424"/>
<dbReference type="eggNOG" id="KOG0667">
    <property type="taxonomic scope" value="Eukaryota"/>
</dbReference>
<dbReference type="GeneTree" id="ENSGT00940000161512"/>
<dbReference type="HOGENOM" id="CLU_000288_5_14_1"/>
<dbReference type="InParanoid" id="Q3V016"/>
<dbReference type="OMA" id="DMTMDAE"/>
<dbReference type="OrthoDB" id="437530at2759"/>
<dbReference type="PhylomeDB" id="Q3V016"/>
<dbReference type="TreeFam" id="TF105417"/>
<dbReference type="BioGRID-ORCS" id="233020">
    <property type="hits" value="2 hits in 80 CRISPR screens"/>
</dbReference>
<dbReference type="PRO" id="PR:Q3V016"/>
<dbReference type="Proteomes" id="UP000000589">
    <property type="component" value="Chromosome 7"/>
</dbReference>
<dbReference type="RNAct" id="Q3V016">
    <property type="molecule type" value="protein"/>
</dbReference>
<dbReference type="Bgee" id="ENSMUSG00000040424">
    <property type="expression patterns" value="Expressed in spermatid and 50 other cell types or tissues"/>
</dbReference>
<dbReference type="GO" id="GO:0005737">
    <property type="term" value="C:cytoplasm"/>
    <property type="evidence" value="ECO:0000314"/>
    <property type="project" value="MGI"/>
</dbReference>
<dbReference type="GO" id="GO:0005634">
    <property type="term" value="C:nucleus"/>
    <property type="evidence" value="ECO:0000314"/>
    <property type="project" value="MGI"/>
</dbReference>
<dbReference type="GO" id="GO:0005524">
    <property type="term" value="F:ATP binding"/>
    <property type="evidence" value="ECO:0007669"/>
    <property type="project" value="UniProtKB-KW"/>
</dbReference>
<dbReference type="GO" id="GO:0035173">
    <property type="term" value="F:histone kinase activity"/>
    <property type="evidence" value="ECO:0000314"/>
    <property type="project" value="MGI"/>
</dbReference>
<dbReference type="GO" id="GO:0004672">
    <property type="term" value="F:protein kinase activity"/>
    <property type="evidence" value="ECO:0000314"/>
    <property type="project" value="MGI"/>
</dbReference>
<dbReference type="GO" id="GO:0106310">
    <property type="term" value="F:protein serine kinase activity"/>
    <property type="evidence" value="ECO:0007669"/>
    <property type="project" value="RHEA"/>
</dbReference>
<dbReference type="GO" id="GO:0004674">
    <property type="term" value="F:protein serine/threonine kinase activity"/>
    <property type="evidence" value="ECO:0007669"/>
    <property type="project" value="UniProtKB-KW"/>
</dbReference>
<dbReference type="GO" id="GO:1901796">
    <property type="term" value="P:regulation of signal transduction by p53 class mediator"/>
    <property type="evidence" value="ECO:0000314"/>
    <property type="project" value="MGI"/>
</dbReference>
<dbReference type="FunFam" id="1.10.510.10:FF:000029">
    <property type="entry name" value="Homeodomain-interacting protein kinase 2 isoform 1"/>
    <property type="match status" value="1"/>
</dbReference>
<dbReference type="Gene3D" id="3.30.200.20">
    <property type="entry name" value="Phosphorylase Kinase, domain 1"/>
    <property type="match status" value="1"/>
</dbReference>
<dbReference type="Gene3D" id="1.10.510.10">
    <property type="entry name" value="Transferase(Phosphotransferase) domain 1"/>
    <property type="match status" value="1"/>
</dbReference>
<dbReference type="InterPro" id="IPR011009">
    <property type="entry name" value="Kinase-like_dom_sf"/>
</dbReference>
<dbReference type="InterPro" id="IPR000719">
    <property type="entry name" value="Prot_kinase_dom"/>
</dbReference>
<dbReference type="InterPro" id="IPR017441">
    <property type="entry name" value="Protein_kinase_ATP_BS"/>
</dbReference>
<dbReference type="InterPro" id="IPR008271">
    <property type="entry name" value="Ser/Thr_kinase_AS"/>
</dbReference>
<dbReference type="InterPro" id="IPR050494">
    <property type="entry name" value="Ser_Thr_dual-spec_kinase"/>
</dbReference>
<dbReference type="PANTHER" id="PTHR24058">
    <property type="entry name" value="DUAL SPECIFICITY PROTEIN KINASE"/>
    <property type="match status" value="1"/>
</dbReference>
<dbReference type="PANTHER" id="PTHR24058:SF46">
    <property type="entry name" value="HOMEODOMAIN-INTERACTING PROTEIN KINASE 4"/>
    <property type="match status" value="1"/>
</dbReference>
<dbReference type="Pfam" id="PF00069">
    <property type="entry name" value="Pkinase"/>
    <property type="match status" value="1"/>
</dbReference>
<dbReference type="SMART" id="SM00220">
    <property type="entry name" value="S_TKc"/>
    <property type="match status" value="1"/>
</dbReference>
<dbReference type="SUPFAM" id="SSF56112">
    <property type="entry name" value="Protein kinase-like (PK-like)"/>
    <property type="match status" value="1"/>
</dbReference>
<dbReference type="PROSITE" id="PS00107">
    <property type="entry name" value="PROTEIN_KINASE_ATP"/>
    <property type="match status" value="1"/>
</dbReference>
<dbReference type="PROSITE" id="PS50011">
    <property type="entry name" value="PROTEIN_KINASE_DOM"/>
    <property type="match status" value="1"/>
</dbReference>
<dbReference type="PROSITE" id="PS00108">
    <property type="entry name" value="PROTEIN_KINASE_ST"/>
    <property type="match status" value="1"/>
</dbReference>
<accession>Q3V016</accession>
<accession>A8R3X8</accession>
<accession>B9EJV5</accession>
<gene>
    <name type="primary">Hipk4</name>
    <name type="synonym">Gm162</name>
</gene>
<feature type="chain" id="PRO_0000277604" description="Homeodomain-interacting protein kinase 4">
    <location>
        <begin position="1"/>
        <end position="616"/>
    </location>
</feature>
<feature type="domain" description="Protein kinase" evidence="1">
    <location>
        <begin position="11"/>
        <end position="347"/>
    </location>
</feature>
<feature type="region of interest" description="Disordered" evidence="3">
    <location>
        <begin position="487"/>
        <end position="616"/>
    </location>
</feature>
<feature type="compositionally biased region" description="Polar residues" evidence="3">
    <location>
        <begin position="497"/>
        <end position="512"/>
    </location>
</feature>
<feature type="compositionally biased region" description="Basic and acidic residues" evidence="3">
    <location>
        <begin position="542"/>
        <end position="560"/>
    </location>
</feature>
<feature type="active site" description="Proton acceptor" evidence="1 2">
    <location>
        <position position="136"/>
    </location>
</feature>
<feature type="binding site" evidence="1">
    <location>
        <begin position="17"/>
        <end position="25"/>
    </location>
    <ligand>
        <name>ATP</name>
        <dbReference type="ChEBI" id="CHEBI:30616"/>
    </ligand>
</feature>
<feature type="binding site" evidence="1">
    <location>
        <position position="40"/>
    </location>
    <ligand>
        <name>ATP</name>
        <dbReference type="ChEBI" id="CHEBI:30616"/>
    </ligand>
</feature>
<feature type="modified residue" description="Phosphoserine" evidence="8">
    <location>
        <position position="512"/>
    </location>
</feature>
<feature type="splice variant" id="VSP_023035" description="In isoform 2." evidence="5 6">
    <location>
        <begin position="1"/>
        <end position="204"/>
    </location>
</feature>
<feature type="mutagenesis site" description="Loss of activity." evidence="4">
    <original>K</original>
    <variation>S</variation>
    <location>
        <position position="40"/>
    </location>
</feature>
<feature type="sequence conflict" description="In Ref. 1; BAF93448 and 2; BAE21689." evidence="7" ref="1 2">
    <original>P</original>
    <variation>T</variation>
    <location>
        <position position="381"/>
    </location>
</feature>
<feature type="sequence conflict" description="In Ref. 1; BAF93448 and 2; BAE21689." evidence="7" ref="1 2">
    <original>D</original>
    <variation>N</variation>
    <location>
        <position position="499"/>
    </location>
</feature>
<sequence length="616" mass="69279">MATIQSETDCYDIIEVLGKGTFGEVAKGWRRSTGEMVAIKILKNDAYRSRIIKNELKLLRCVRGLDPDEAHVIRFLEFFHDALKFYLVFELLEQNLFEFQKENNFAPLPARHIRTVTLQVLRALARLKELAIIHADLKPENIMLVDQTRCPFRVKVIDFGSASIFSEVRYVKEPYIQSRFYRAPEILLGLPFCEKVDVWSLGCVMAELHLGWPLYPGNNEYDQVRYICETQGLPKPHLLHAARKAHHFFKRNPHPDATNPWQLKSSADYLAETKVRPLERRKYMLKSLDQIETVNGGGAVSRLSFPDREALAEHADLKSMVELIKRMLTWESHERISPSAALRHPFVSMQQLRSAHEATRYYQLSLRGCRLSLQVDGKPPPPVIASAEDGPPYYRLAEEEETAGLGGVTGSGSFFREDKAPGMQRAIDQLDDLSLQEARRGLWSDTRADMVSDMLVPLKVASTSHRVPDSGPEPILAFYGSRLTGRHKARKAPAGSKSDSNFSNLIRLSQASPEDAGPCRGSGWEEGEGRTTSTEPSVIPQREGDGPGIKDRPMDAERPGPELFDPSSCPGEWLSEPEWTLEGIRGSRAQGLPAHHPHPHGPPRTTSFLQHVGGHH</sequence>
<reference key="1">
    <citation type="journal article" date="2007" name="FEBS Lett.">
        <title>Novel homeodomain-interacting protein kinase family member, HIPK4, phosphorylates human p53 at serine 9.</title>
        <authorList>
            <person name="Arai S."/>
            <person name="Matsushita A."/>
            <person name="Du K."/>
            <person name="Yagi K."/>
            <person name="Okazaki Y."/>
            <person name="Kurokawa R."/>
        </authorList>
    </citation>
    <scope>NUCLEOTIDE SEQUENCE [MRNA] (ISOFORM 1)</scope>
    <scope>FUNCTION</scope>
    <scope>SUBCELLULAR LOCATION</scope>
    <scope>TISSUE SPECIFICITY</scope>
    <scope>AUTOPHOSPHORYLATION</scope>
    <scope>MUTAGENESIS OF LYS-40</scope>
</reference>
<reference key="2">
    <citation type="journal article" date="2005" name="Science">
        <title>The transcriptional landscape of the mammalian genome.</title>
        <authorList>
            <person name="Carninci P."/>
            <person name="Kasukawa T."/>
            <person name="Katayama S."/>
            <person name="Gough J."/>
            <person name="Frith M.C."/>
            <person name="Maeda N."/>
            <person name="Oyama R."/>
            <person name="Ravasi T."/>
            <person name="Lenhard B."/>
            <person name="Wells C."/>
            <person name="Kodzius R."/>
            <person name="Shimokawa K."/>
            <person name="Bajic V.B."/>
            <person name="Brenner S.E."/>
            <person name="Batalov S."/>
            <person name="Forrest A.R."/>
            <person name="Zavolan M."/>
            <person name="Davis M.J."/>
            <person name="Wilming L.G."/>
            <person name="Aidinis V."/>
            <person name="Allen J.E."/>
            <person name="Ambesi-Impiombato A."/>
            <person name="Apweiler R."/>
            <person name="Aturaliya R.N."/>
            <person name="Bailey T.L."/>
            <person name="Bansal M."/>
            <person name="Baxter L."/>
            <person name="Beisel K.W."/>
            <person name="Bersano T."/>
            <person name="Bono H."/>
            <person name="Chalk A.M."/>
            <person name="Chiu K.P."/>
            <person name="Choudhary V."/>
            <person name="Christoffels A."/>
            <person name="Clutterbuck D.R."/>
            <person name="Crowe M.L."/>
            <person name="Dalla E."/>
            <person name="Dalrymple B.P."/>
            <person name="de Bono B."/>
            <person name="Della Gatta G."/>
            <person name="di Bernardo D."/>
            <person name="Down T."/>
            <person name="Engstrom P."/>
            <person name="Fagiolini M."/>
            <person name="Faulkner G."/>
            <person name="Fletcher C.F."/>
            <person name="Fukushima T."/>
            <person name="Furuno M."/>
            <person name="Futaki S."/>
            <person name="Gariboldi M."/>
            <person name="Georgii-Hemming P."/>
            <person name="Gingeras T.R."/>
            <person name="Gojobori T."/>
            <person name="Green R.E."/>
            <person name="Gustincich S."/>
            <person name="Harbers M."/>
            <person name="Hayashi Y."/>
            <person name="Hensch T.K."/>
            <person name="Hirokawa N."/>
            <person name="Hill D."/>
            <person name="Huminiecki L."/>
            <person name="Iacono M."/>
            <person name="Ikeo K."/>
            <person name="Iwama A."/>
            <person name="Ishikawa T."/>
            <person name="Jakt M."/>
            <person name="Kanapin A."/>
            <person name="Katoh M."/>
            <person name="Kawasawa Y."/>
            <person name="Kelso J."/>
            <person name="Kitamura H."/>
            <person name="Kitano H."/>
            <person name="Kollias G."/>
            <person name="Krishnan S.P."/>
            <person name="Kruger A."/>
            <person name="Kummerfeld S.K."/>
            <person name="Kurochkin I.V."/>
            <person name="Lareau L.F."/>
            <person name="Lazarevic D."/>
            <person name="Lipovich L."/>
            <person name="Liu J."/>
            <person name="Liuni S."/>
            <person name="McWilliam S."/>
            <person name="Madan Babu M."/>
            <person name="Madera M."/>
            <person name="Marchionni L."/>
            <person name="Matsuda H."/>
            <person name="Matsuzawa S."/>
            <person name="Miki H."/>
            <person name="Mignone F."/>
            <person name="Miyake S."/>
            <person name="Morris K."/>
            <person name="Mottagui-Tabar S."/>
            <person name="Mulder N."/>
            <person name="Nakano N."/>
            <person name="Nakauchi H."/>
            <person name="Ng P."/>
            <person name="Nilsson R."/>
            <person name="Nishiguchi S."/>
            <person name="Nishikawa S."/>
            <person name="Nori F."/>
            <person name="Ohara O."/>
            <person name="Okazaki Y."/>
            <person name="Orlando V."/>
            <person name="Pang K.C."/>
            <person name="Pavan W.J."/>
            <person name="Pavesi G."/>
            <person name="Pesole G."/>
            <person name="Petrovsky N."/>
            <person name="Piazza S."/>
            <person name="Reed J."/>
            <person name="Reid J.F."/>
            <person name="Ring B.Z."/>
            <person name="Ringwald M."/>
            <person name="Rost B."/>
            <person name="Ruan Y."/>
            <person name="Salzberg S.L."/>
            <person name="Sandelin A."/>
            <person name="Schneider C."/>
            <person name="Schoenbach C."/>
            <person name="Sekiguchi K."/>
            <person name="Semple C.A."/>
            <person name="Seno S."/>
            <person name="Sessa L."/>
            <person name="Sheng Y."/>
            <person name="Shibata Y."/>
            <person name="Shimada H."/>
            <person name="Shimada K."/>
            <person name="Silva D."/>
            <person name="Sinclair B."/>
            <person name="Sperling S."/>
            <person name="Stupka E."/>
            <person name="Sugiura K."/>
            <person name="Sultana R."/>
            <person name="Takenaka Y."/>
            <person name="Taki K."/>
            <person name="Tammoja K."/>
            <person name="Tan S.L."/>
            <person name="Tang S."/>
            <person name="Taylor M.S."/>
            <person name="Tegner J."/>
            <person name="Teichmann S.A."/>
            <person name="Ueda H.R."/>
            <person name="van Nimwegen E."/>
            <person name="Verardo R."/>
            <person name="Wei C.L."/>
            <person name="Yagi K."/>
            <person name="Yamanishi H."/>
            <person name="Zabarovsky E."/>
            <person name="Zhu S."/>
            <person name="Zimmer A."/>
            <person name="Hide W."/>
            <person name="Bult C."/>
            <person name="Grimmond S.M."/>
            <person name="Teasdale R.D."/>
            <person name="Liu E.T."/>
            <person name="Brusic V."/>
            <person name="Quackenbush J."/>
            <person name="Wahlestedt C."/>
            <person name="Mattick J.S."/>
            <person name="Hume D.A."/>
            <person name="Kai C."/>
            <person name="Sasaki D."/>
            <person name="Tomaru Y."/>
            <person name="Fukuda S."/>
            <person name="Kanamori-Katayama M."/>
            <person name="Suzuki M."/>
            <person name="Aoki J."/>
            <person name="Arakawa T."/>
            <person name="Iida J."/>
            <person name="Imamura K."/>
            <person name="Itoh M."/>
            <person name="Kato T."/>
            <person name="Kawaji H."/>
            <person name="Kawagashira N."/>
            <person name="Kawashima T."/>
            <person name="Kojima M."/>
            <person name="Kondo S."/>
            <person name="Konno H."/>
            <person name="Nakano K."/>
            <person name="Ninomiya N."/>
            <person name="Nishio T."/>
            <person name="Okada M."/>
            <person name="Plessy C."/>
            <person name="Shibata K."/>
            <person name="Shiraki T."/>
            <person name="Suzuki S."/>
            <person name="Tagami M."/>
            <person name="Waki K."/>
            <person name="Watahiki A."/>
            <person name="Okamura-Oho Y."/>
            <person name="Suzuki H."/>
            <person name="Kawai J."/>
            <person name="Hayashizaki Y."/>
        </authorList>
    </citation>
    <scope>NUCLEOTIDE SEQUENCE [LARGE SCALE MRNA] (ISOFORM 2)</scope>
    <source>
        <strain>C57BL/6J</strain>
        <tissue>Ovary</tissue>
        <tissue>Uterus</tissue>
    </source>
</reference>
<reference key="3">
    <citation type="journal article" date="2009" name="PLoS Biol.">
        <title>Lineage-specific biology revealed by a finished genome assembly of the mouse.</title>
        <authorList>
            <person name="Church D.M."/>
            <person name="Goodstadt L."/>
            <person name="Hillier L.W."/>
            <person name="Zody M.C."/>
            <person name="Goldstein S."/>
            <person name="She X."/>
            <person name="Bult C.J."/>
            <person name="Agarwala R."/>
            <person name="Cherry J.L."/>
            <person name="DiCuccio M."/>
            <person name="Hlavina W."/>
            <person name="Kapustin Y."/>
            <person name="Meric P."/>
            <person name="Maglott D."/>
            <person name="Birtle Z."/>
            <person name="Marques A.C."/>
            <person name="Graves T."/>
            <person name="Zhou S."/>
            <person name="Teague B."/>
            <person name="Potamousis K."/>
            <person name="Churas C."/>
            <person name="Place M."/>
            <person name="Herschleb J."/>
            <person name="Runnheim R."/>
            <person name="Forrest D."/>
            <person name="Amos-Landgraf J."/>
            <person name="Schwartz D.C."/>
            <person name="Cheng Z."/>
            <person name="Lindblad-Toh K."/>
            <person name="Eichler E.E."/>
            <person name="Ponting C.P."/>
        </authorList>
    </citation>
    <scope>NUCLEOTIDE SEQUENCE [LARGE SCALE GENOMIC DNA]</scope>
    <source>
        <strain>C57BL/6J</strain>
    </source>
</reference>
<reference key="4">
    <citation type="journal article" date="2004" name="Genome Res.">
        <title>The status, quality, and expansion of the NIH full-length cDNA project: the Mammalian Gene Collection (MGC).</title>
        <authorList>
            <consortium name="The MGC Project Team"/>
        </authorList>
    </citation>
    <scope>NUCLEOTIDE SEQUENCE [LARGE SCALE MRNA] (ISOFORM 2)</scope>
    <source>
        <tissue>Brain</tissue>
    </source>
</reference>
<reference key="5">
    <citation type="journal article" date="2010" name="Cell">
        <title>A tissue-specific atlas of mouse protein phosphorylation and expression.</title>
        <authorList>
            <person name="Huttlin E.L."/>
            <person name="Jedrychowski M.P."/>
            <person name="Elias J.E."/>
            <person name="Goswami T."/>
            <person name="Rad R."/>
            <person name="Beausoleil S.A."/>
            <person name="Villen J."/>
            <person name="Haas W."/>
            <person name="Sowa M.E."/>
            <person name="Gygi S.P."/>
        </authorList>
    </citation>
    <scope>PHOSPHORYLATION [LARGE SCALE ANALYSIS] AT SER-512</scope>
    <scope>IDENTIFICATION BY MASS SPECTROMETRY [LARGE SCALE ANALYSIS]</scope>
    <source>
        <tissue>Testis</tissue>
    </source>
</reference>
<comment type="function">
    <text evidence="7">Protein kinase that phosphorylates murine TP53 at Ser-9, and thus induces TP53 repression of BIRC5 promoter. May act as a corepressor of transcription factors (Potential).</text>
</comment>
<comment type="catalytic activity">
    <reaction>
        <text>L-seryl-[protein] + ATP = O-phospho-L-seryl-[protein] + ADP + H(+)</text>
        <dbReference type="Rhea" id="RHEA:17989"/>
        <dbReference type="Rhea" id="RHEA-COMP:9863"/>
        <dbReference type="Rhea" id="RHEA-COMP:11604"/>
        <dbReference type="ChEBI" id="CHEBI:15378"/>
        <dbReference type="ChEBI" id="CHEBI:29999"/>
        <dbReference type="ChEBI" id="CHEBI:30616"/>
        <dbReference type="ChEBI" id="CHEBI:83421"/>
        <dbReference type="ChEBI" id="CHEBI:456216"/>
        <dbReference type="EC" id="2.7.11.1"/>
    </reaction>
</comment>
<comment type="catalytic activity">
    <reaction>
        <text>L-threonyl-[protein] + ATP = O-phospho-L-threonyl-[protein] + ADP + H(+)</text>
        <dbReference type="Rhea" id="RHEA:46608"/>
        <dbReference type="Rhea" id="RHEA-COMP:11060"/>
        <dbReference type="Rhea" id="RHEA-COMP:11605"/>
        <dbReference type="ChEBI" id="CHEBI:15378"/>
        <dbReference type="ChEBI" id="CHEBI:30013"/>
        <dbReference type="ChEBI" id="CHEBI:30616"/>
        <dbReference type="ChEBI" id="CHEBI:61977"/>
        <dbReference type="ChEBI" id="CHEBI:456216"/>
        <dbReference type="EC" id="2.7.11.1"/>
    </reaction>
</comment>
<comment type="subcellular location">
    <subcellularLocation>
        <location evidence="4">Cytoplasm</location>
    </subcellularLocation>
</comment>
<comment type="alternative products">
    <event type="alternative splicing"/>
    <isoform>
        <id>Q3V016-1</id>
        <name>1</name>
        <sequence type="displayed"/>
    </isoform>
    <isoform>
        <id>Q3V016-2</id>
        <name>2</name>
        <sequence type="described" ref="VSP_023035"/>
    </isoform>
</comment>
<comment type="tissue specificity">
    <text evidence="4">Expressed at moderate levels in lung and white adipose tissues and weakly in brain and liver.</text>
</comment>
<comment type="PTM">
    <text>Autophosphorylated.</text>
</comment>
<comment type="similarity">
    <text evidence="7">Belongs to the protein kinase superfamily. CMGC Ser/Thr protein kinase family. HIPK subfamily.</text>
</comment>
<protein>
    <recommendedName>
        <fullName>Homeodomain-interacting protein kinase 4</fullName>
        <ecNumber>2.7.11.1</ecNumber>
    </recommendedName>
</protein>
<keyword id="KW-0025">Alternative splicing</keyword>
<keyword id="KW-0067">ATP-binding</keyword>
<keyword id="KW-0963">Cytoplasm</keyword>
<keyword id="KW-0418">Kinase</keyword>
<keyword id="KW-0547">Nucleotide-binding</keyword>
<keyword id="KW-0597">Phosphoprotein</keyword>
<keyword id="KW-1185">Reference proteome</keyword>
<keyword id="KW-0723">Serine/threonine-protein kinase</keyword>
<keyword id="KW-0808">Transferase</keyword>
<organism>
    <name type="scientific">Mus musculus</name>
    <name type="common">Mouse</name>
    <dbReference type="NCBI Taxonomy" id="10090"/>
    <lineage>
        <taxon>Eukaryota</taxon>
        <taxon>Metazoa</taxon>
        <taxon>Chordata</taxon>
        <taxon>Craniata</taxon>
        <taxon>Vertebrata</taxon>
        <taxon>Euteleostomi</taxon>
        <taxon>Mammalia</taxon>
        <taxon>Eutheria</taxon>
        <taxon>Euarchontoglires</taxon>
        <taxon>Glires</taxon>
        <taxon>Rodentia</taxon>
        <taxon>Myomorpha</taxon>
        <taxon>Muroidea</taxon>
        <taxon>Muridae</taxon>
        <taxon>Murinae</taxon>
        <taxon>Mus</taxon>
        <taxon>Mus</taxon>
    </lineage>
</organism>
<proteinExistence type="evidence at protein level"/>
<name>HIPK4_MOUSE</name>